<evidence type="ECO:0000250" key="1">
    <source>
        <dbReference type="UniProtKB" id="Q7CPJ9"/>
    </source>
</evidence>
<evidence type="ECO:0000255" key="2">
    <source>
        <dbReference type="HAMAP-Rule" id="MF_02018"/>
    </source>
</evidence>
<evidence type="ECO:0000269" key="3">
    <source>
    </source>
</evidence>
<evidence type="ECO:0000269" key="4">
    <source>
    </source>
</evidence>
<evidence type="ECO:0000269" key="5">
    <source>
    </source>
</evidence>
<evidence type="ECO:0000269" key="6">
    <source ref="6"/>
</evidence>
<evidence type="ECO:0000269" key="7">
    <source ref="7"/>
</evidence>
<evidence type="ECO:0000303" key="8">
    <source>
    </source>
</evidence>
<evidence type="ECO:0000305" key="9"/>
<evidence type="ECO:0007744" key="10">
    <source>
        <dbReference type="PDB" id="2K5T"/>
    </source>
</evidence>
<evidence type="ECO:0007744" key="11">
    <source>
        <dbReference type="PDB" id="4CRY"/>
    </source>
</evidence>
<evidence type="ECO:0007744" key="12">
    <source>
        <dbReference type="PDB" id="4CRZ"/>
    </source>
</evidence>
<evidence type="ECO:0007744" key="13">
    <source>
        <dbReference type="PDB" id="4CS0"/>
    </source>
</evidence>
<evidence type="ECO:0007829" key="14">
    <source>
        <dbReference type="PDB" id="5LS7"/>
    </source>
</evidence>
<organism>
    <name type="scientific">Escherichia coli (strain K12)</name>
    <dbReference type="NCBI Taxonomy" id="83333"/>
    <lineage>
        <taxon>Bacteria</taxon>
        <taxon>Pseudomonadati</taxon>
        <taxon>Pseudomonadota</taxon>
        <taxon>Gammaproteobacteria</taxon>
        <taxon>Enterobacterales</taxon>
        <taxon>Enterobacteriaceae</taxon>
        <taxon>Escherichia</taxon>
    </lineage>
</organism>
<proteinExistence type="evidence at protein level"/>
<accession>P37613</accession>
<accession>Q2M7C2</accession>
<reference key="1">
    <citation type="journal article" date="1994" name="Nucleic Acids Res.">
        <title>Analysis of the Escherichia coli genome. V. DNA sequence of the region from 76.0 to 81.5 minutes.</title>
        <authorList>
            <person name="Sofia H.J."/>
            <person name="Burland V."/>
            <person name="Daniels D.L."/>
            <person name="Plunkett G. III"/>
            <person name="Blattner F.R."/>
        </authorList>
    </citation>
    <scope>NUCLEOTIDE SEQUENCE [LARGE SCALE GENOMIC DNA]</scope>
    <source>
        <strain>K12 / MG1655 / ATCC 47076</strain>
    </source>
</reference>
<reference key="2">
    <citation type="journal article" date="1997" name="Science">
        <title>The complete genome sequence of Escherichia coli K-12.</title>
        <authorList>
            <person name="Blattner F.R."/>
            <person name="Plunkett G. III"/>
            <person name="Bloch C.A."/>
            <person name="Perna N.T."/>
            <person name="Burland V."/>
            <person name="Riley M."/>
            <person name="Collado-Vides J."/>
            <person name="Glasner J.D."/>
            <person name="Rode C.K."/>
            <person name="Mayhew G.F."/>
            <person name="Gregor J."/>
            <person name="Davis N.W."/>
            <person name="Kirkpatrick H.A."/>
            <person name="Goeden M.A."/>
            <person name="Rose D.J."/>
            <person name="Mau B."/>
            <person name="Shao Y."/>
        </authorList>
    </citation>
    <scope>NUCLEOTIDE SEQUENCE [LARGE SCALE GENOMIC DNA]</scope>
    <source>
        <strain>K12 / MG1655 / ATCC 47076</strain>
    </source>
</reference>
<reference key="3">
    <citation type="journal article" date="2006" name="Mol. Syst. Biol.">
        <title>Highly accurate genome sequences of Escherichia coli K-12 strains MG1655 and W3110.</title>
        <authorList>
            <person name="Hayashi K."/>
            <person name="Morooka N."/>
            <person name="Yamamoto Y."/>
            <person name="Fujita K."/>
            <person name="Isono K."/>
            <person name="Choi S."/>
            <person name="Ohtsubo E."/>
            <person name="Baba T."/>
            <person name="Wanner B.L."/>
            <person name="Mori H."/>
            <person name="Horiuchi T."/>
        </authorList>
    </citation>
    <scope>NUCLEOTIDE SEQUENCE [LARGE SCALE GENOMIC DNA]</scope>
    <source>
        <strain>K12 / W3110 / ATCC 27325 / DSM 5911</strain>
    </source>
</reference>
<reference key="4">
    <citation type="journal article" date="2012" name="Biochem. Biophys. Res. Commun.">
        <title>Formation of a heterooctameric complex between aspartate alpha-decarboxylase and its cognate activating factor, PanZ, is CoA-dependent.</title>
        <authorList>
            <person name="Monteiro D.C."/>
            <person name="Rugen M.D."/>
            <person name="Shepherd D."/>
            <person name="Nozaki S."/>
            <person name="Niki H."/>
            <person name="Webb M.E."/>
        </authorList>
    </citation>
    <scope>INTERACTION WITH PAND</scope>
    <scope>SUBUNIT</scope>
</reference>
<reference key="5">
    <citation type="journal article" date="2012" name="MicrobiologyOpen">
        <title>An activator for pyruvoyl-dependent l-aspartate alpha-decarboxylase is conserved in a small group of the gamma-proteobacteria including Escherichia coli.</title>
        <authorList>
            <person name="Nozaki S."/>
            <person name="Webb M.E."/>
            <person name="Niki H."/>
        </authorList>
    </citation>
    <scope>FUNCTION</scope>
    <scope>INTERACTION WITH PAND</scope>
    <scope>DISRUPTION PHENOTYPE</scope>
    <source>
        <strain>K12 / MG1655 / ATCC 47076</strain>
    </source>
</reference>
<reference evidence="10" key="6">
    <citation type="submission" date="2008-06" db="PDB data bank">
        <title>Solution NMR structure of putative N-acetyl transferase YhhK from E. coli bound to coenzyme A.</title>
        <authorList>
            <person name="Cort J.R."/>
            <person name="Yee A."/>
            <person name="Arrowsmith C.H."/>
            <person name="Kennedy M.A."/>
        </authorList>
    </citation>
    <scope>STRUCTURE BY NMR IN COMPLEX WITH COENZYME A</scope>
</reference>
<reference evidence="11" key="7">
    <citation type="submission" date="2014-03" db="PDB data bank">
        <title>Direct visualisation of strain-induced protein post-translational modification.</title>
        <authorList>
            <person name="Monteiro D.C.F."/>
            <person name="Patel V."/>
            <person name="Bartlett C.P."/>
            <person name="Grant T.D."/>
            <person name="Nozaki S."/>
            <person name="Gowdy J.A."/>
            <person name="Snell E.H."/>
            <person name="Niki H."/>
            <person name="Pearson A.R."/>
            <person name="Webb M.E."/>
        </authorList>
    </citation>
    <scope>X-RAY CRYSTALLOGRAPHY (1.61 ANGSTROMS) IN COMPLEX WITH PAND AND ACETYL COENZYME A</scope>
</reference>
<reference evidence="12 13" key="8">
    <citation type="journal article" date="2015" name="Chem. Biol.">
        <title>The structure of the PanD/PanZ protein complex reveals negative feedback regulation of pantothenate biosynthesis by coenzyme A.</title>
        <authorList>
            <person name="Monteiro D.C."/>
            <person name="Patel V."/>
            <person name="Bartlett C.P."/>
            <person name="Nozaki S."/>
            <person name="Grant T.D."/>
            <person name="Gowdy J.A."/>
            <person name="Thompson G.S."/>
            <person name="Kalverda A.P."/>
            <person name="Snell E.H."/>
            <person name="Niki H."/>
            <person name="Pearson A.R."/>
            <person name="Webb M.E."/>
        </authorList>
    </citation>
    <scope>X-RAY CRYSTALLOGRAPHY (1.70 ANGSTROMS) IN COMPLEXES WITH PAND AND ACETYL COENZYME A</scope>
    <scope>FUNCTION</scope>
    <scope>ACTIVITY REGULATION</scope>
    <scope>INTERACTION WITH PAND</scope>
    <scope>SUBUNIT</scope>
    <scope>MUTAGENESIS OF ASN-45</scope>
</reference>
<dbReference type="EMBL" id="U00039">
    <property type="protein sequence ID" value="AAB18434.1"/>
    <property type="molecule type" value="Genomic_DNA"/>
</dbReference>
<dbReference type="EMBL" id="U00096">
    <property type="protein sequence ID" value="AAC76484.1"/>
    <property type="molecule type" value="Genomic_DNA"/>
</dbReference>
<dbReference type="EMBL" id="AP009048">
    <property type="protein sequence ID" value="BAE77834.1"/>
    <property type="molecule type" value="Genomic_DNA"/>
</dbReference>
<dbReference type="PIR" id="S47678">
    <property type="entry name" value="S47678"/>
</dbReference>
<dbReference type="RefSeq" id="NP_417916.1">
    <property type="nucleotide sequence ID" value="NC_000913.3"/>
</dbReference>
<dbReference type="RefSeq" id="WP_000778768.1">
    <property type="nucleotide sequence ID" value="NZ_SSZK01000008.1"/>
</dbReference>
<dbReference type="PDB" id="2K5T">
    <property type="method" value="NMR"/>
    <property type="chains" value="A=1-127"/>
</dbReference>
<dbReference type="PDB" id="4CRY">
    <property type="method" value="X-ray"/>
    <property type="resolution" value="1.61 A"/>
    <property type="chains" value="B=1-127"/>
</dbReference>
<dbReference type="PDB" id="4CRZ">
    <property type="method" value="X-ray"/>
    <property type="resolution" value="1.70 A"/>
    <property type="chains" value="B=1-127"/>
</dbReference>
<dbReference type="PDB" id="4CS0">
    <property type="method" value="X-ray"/>
    <property type="resolution" value="2.10 A"/>
    <property type="chains" value="B=1-127"/>
</dbReference>
<dbReference type="PDB" id="5LS7">
    <property type="method" value="X-ray"/>
    <property type="resolution" value="1.16 A"/>
    <property type="chains" value="B=1-127"/>
</dbReference>
<dbReference type="PDBsum" id="2K5T"/>
<dbReference type="PDBsum" id="4CRY"/>
<dbReference type="PDBsum" id="4CRZ"/>
<dbReference type="PDBsum" id="4CS0"/>
<dbReference type="PDBsum" id="5LS7"/>
<dbReference type="BMRB" id="P37613"/>
<dbReference type="SMR" id="P37613"/>
<dbReference type="BioGRID" id="4262496">
    <property type="interactions" value="9"/>
</dbReference>
<dbReference type="FunCoup" id="P37613">
    <property type="interactions" value="38"/>
</dbReference>
<dbReference type="IntAct" id="P37613">
    <property type="interactions" value="2"/>
</dbReference>
<dbReference type="STRING" id="511145.b3459"/>
<dbReference type="jPOST" id="P37613"/>
<dbReference type="PaxDb" id="511145-b3459"/>
<dbReference type="DNASU" id="947963"/>
<dbReference type="EnsemblBacteria" id="AAC76484">
    <property type="protein sequence ID" value="AAC76484"/>
    <property type="gene ID" value="b3459"/>
</dbReference>
<dbReference type="GeneID" id="947963"/>
<dbReference type="KEGG" id="ecj:JW3424"/>
<dbReference type="KEGG" id="eco:b3459"/>
<dbReference type="KEGG" id="ecoc:C3026_18735"/>
<dbReference type="PATRIC" id="fig|1411691.4.peg.3266"/>
<dbReference type="EchoBASE" id="EB2125"/>
<dbReference type="eggNOG" id="COG0456">
    <property type="taxonomic scope" value="Bacteria"/>
</dbReference>
<dbReference type="HOGENOM" id="CLU_135649_0_0_6"/>
<dbReference type="InParanoid" id="P37613"/>
<dbReference type="OMA" id="KIWPSQD"/>
<dbReference type="OrthoDB" id="5736859at2"/>
<dbReference type="PhylomeDB" id="P37613"/>
<dbReference type="BioCyc" id="EcoCyc:EG12211-MONOMER"/>
<dbReference type="BioCyc" id="MetaCyc:EG12211-MONOMER"/>
<dbReference type="EvolutionaryTrace" id="P37613"/>
<dbReference type="PRO" id="PR:P37613"/>
<dbReference type="Proteomes" id="UP000000625">
    <property type="component" value="Chromosome"/>
</dbReference>
<dbReference type="GO" id="GO:1905502">
    <property type="term" value="F:acetyl-CoA binding"/>
    <property type="evidence" value="ECO:0000314"/>
    <property type="project" value="EcoCyc"/>
</dbReference>
<dbReference type="GO" id="GO:0016747">
    <property type="term" value="F:acyltransferase activity, transferring groups other than amino-acyl groups"/>
    <property type="evidence" value="ECO:0007669"/>
    <property type="project" value="InterPro"/>
</dbReference>
<dbReference type="GO" id="GO:0015940">
    <property type="term" value="P:pantothenate biosynthetic process"/>
    <property type="evidence" value="ECO:0000315"/>
    <property type="project" value="EcoCyc"/>
</dbReference>
<dbReference type="GO" id="GO:0016485">
    <property type="term" value="P:protein processing"/>
    <property type="evidence" value="ECO:0000266"/>
    <property type="project" value="EcoCyc"/>
</dbReference>
<dbReference type="GO" id="GO:0031638">
    <property type="term" value="P:zymogen activation"/>
    <property type="evidence" value="ECO:0000314"/>
    <property type="project" value="EcoCyc"/>
</dbReference>
<dbReference type="FunFam" id="3.40.630.30:FF:000038">
    <property type="entry name" value="PanD regulatory factor"/>
    <property type="match status" value="1"/>
</dbReference>
<dbReference type="Gene3D" id="3.40.630.30">
    <property type="match status" value="1"/>
</dbReference>
<dbReference type="HAMAP" id="MF_02018">
    <property type="entry name" value="PanZ_PanM"/>
    <property type="match status" value="1"/>
</dbReference>
<dbReference type="InterPro" id="IPR016181">
    <property type="entry name" value="Acyl_CoA_acyltransferase"/>
</dbReference>
<dbReference type="InterPro" id="IPR000182">
    <property type="entry name" value="GNAT_dom"/>
</dbReference>
<dbReference type="InterPro" id="IPR032900">
    <property type="entry name" value="PanZ"/>
</dbReference>
<dbReference type="InterPro" id="IPR040448">
    <property type="entry name" value="PanZ_GNAT"/>
</dbReference>
<dbReference type="NCBIfam" id="NF033213">
    <property type="entry name" value="matur_PanM"/>
    <property type="match status" value="1"/>
</dbReference>
<dbReference type="Pfam" id="PF12568">
    <property type="entry name" value="PanZ"/>
    <property type="match status" value="1"/>
</dbReference>
<dbReference type="SUPFAM" id="SSF55729">
    <property type="entry name" value="Acyl-CoA N-acyltransferases (Nat)"/>
    <property type="match status" value="1"/>
</dbReference>
<dbReference type="PROSITE" id="PS51186">
    <property type="entry name" value="GNAT"/>
    <property type="match status" value="1"/>
</dbReference>
<protein>
    <recommendedName>
        <fullName evidence="2 9">PanD regulatory factor</fullName>
    </recommendedName>
</protein>
<feature type="chain" id="PRO_0000169553" description="PanD regulatory factor">
    <location>
        <begin position="1"/>
        <end position="127"/>
    </location>
</feature>
<feature type="domain" description="N-acetyltransferase" evidence="2">
    <location>
        <begin position="1"/>
        <end position="127"/>
    </location>
</feature>
<feature type="region of interest" description="Interaction with PanD" evidence="5">
    <location>
        <begin position="43"/>
        <end position="48"/>
    </location>
</feature>
<feature type="region of interest" description="Interaction with PanD" evidence="5">
    <location>
        <begin position="66"/>
        <end position="76"/>
    </location>
</feature>
<feature type="binding site" evidence="2 5 6 7 10">
    <location>
        <begin position="66"/>
        <end position="68"/>
    </location>
    <ligand>
        <name>CoA</name>
        <dbReference type="ChEBI" id="CHEBI:57287"/>
    </ligand>
</feature>
<feature type="binding site" evidence="2 5 6 7 10">
    <location>
        <begin position="72"/>
        <end position="79"/>
    </location>
    <ligand>
        <name>CoA</name>
        <dbReference type="ChEBI" id="CHEBI:57287"/>
    </ligand>
</feature>
<feature type="mutagenesis site" description="Loss of affinity for PanD. Is still able to activate but not regulate the PanD protein." evidence="5">
    <original>N</original>
    <variation>A</variation>
    <location>
        <position position="45"/>
    </location>
</feature>
<feature type="strand" evidence="14">
    <location>
        <begin position="4"/>
        <end position="10"/>
    </location>
</feature>
<feature type="helix" evidence="14">
    <location>
        <begin position="13"/>
        <end position="22"/>
    </location>
</feature>
<feature type="helix" evidence="14">
    <location>
        <begin position="28"/>
        <end position="30"/>
    </location>
</feature>
<feature type="strand" evidence="14">
    <location>
        <begin position="37"/>
        <end position="44"/>
    </location>
</feature>
<feature type="strand" evidence="14">
    <location>
        <begin position="47"/>
        <end position="57"/>
    </location>
</feature>
<feature type="strand" evidence="14">
    <location>
        <begin position="60"/>
        <end position="68"/>
    </location>
</feature>
<feature type="helix" evidence="14">
    <location>
        <begin position="70"/>
        <end position="72"/>
    </location>
</feature>
<feature type="strand" evidence="14">
    <location>
        <begin position="74"/>
        <end position="76"/>
    </location>
</feature>
<feature type="helix" evidence="14">
    <location>
        <begin position="77"/>
        <end position="88"/>
    </location>
</feature>
<feature type="strand" evidence="14">
    <location>
        <begin position="94"/>
        <end position="98"/>
    </location>
</feature>
<feature type="helix" evidence="14">
    <location>
        <begin position="105"/>
        <end position="114"/>
    </location>
</feature>
<feature type="strand" evidence="14">
    <location>
        <begin position="118"/>
        <end position="120"/>
    </location>
</feature>
<feature type="strand" evidence="14">
    <location>
        <begin position="123"/>
        <end position="127"/>
    </location>
</feature>
<keyword id="KW-0002">3D-structure</keyword>
<keyword id="KW-0566">Pantothenate biosynthesis</keyword>
<keyword id="KW-1185">Reference proteome</keyword>
<comment type="function">
    <text evidence="4 5">Controls both the activation and catalytic activity of PanD in a coenzyme A (CoA)-dependent fashion. Binding of CoA or a derivative to PanZ leads to interaction with PanD, which promotes the processing and activation of pro-PanD, and subsequent substrate-mediated inhibition of the active form of PanD (PubMed:23170229, PubMed:25910242). Inhibition of PanD activity is probably the primary metabolic role of PanZ, allowing negative feedback regulation of pantothenate biosynthesis by CoA (PubMed:25910242).</text>
</comment>
<comment type="activity regulation">
    <text evidence="5">Activation of PanD processing occurs even at low CoA concentrations. In contrast, full inhibition of PanD catalytic activity only occurs at sufficiently high CoA concentrations.</text>
</comment>
<comment type="subunit">
    <text evidence="3 4 5">Interacts with PanD in the presence of CoA (PubMed:22940551, PubMed:23170229, PubMed:25910242). Forms a heterooctameric complex composed of four PanD subunits and four PanZ subunits (PubMed:22940551, PubMed:25910242). Monomer in solution (PubMed:22940551).</text>
</comment>
<comment type="disruption phenotype">
    <text evidence="4">Deletion mutants are deficient in the biosynthetic pathway for pantothenate.</text>
</comment>
<comment type="similarity">
    <text evidence="2 9">Belongs to the PanZ/PanM family.</text>
</comment>
<comment type="caution">
    <text evidence="1">Lacks the conserved catalytic glutamate found in many enzymatically active members of the Gcn5-like N-acetyltransferase (GNAT) family.</text>
</comment>
<sequence length="127" mass="14506">MKLTIIRLEKFSDQDRIDLQKIWPEYSPSSLQVDDNHRIYAARFNERLLAAVRVTLSGTEGALDSLRVREVTRRRGVGQYLLEEVLRNNPGVSCWWMADAGVEDRGVMTAFMQALGFTAQQGGWEKC</sequence>
<gene>
    <name evidence="2 8" type="primary">panZ</name>
    <name evidence="1" type="synonym">panM</name>
    <name type="synonym">yhhK</name>
    <name type="ordered locus">b3459</name>
    <name type="ordered locus">JW3424</name>
</gene>
<name>PANZ_ECOLI</name>